<reference key="1">
    <citation type="journal article" date="2004" name="Science">
        <title>The 1.2-megabase genome sequence of Mimivirus.</title>
        <authorList>
            <person name="Raoult D."/>
            <person name="Audic S."/>
            <person name="Robert C."/>
            <person name="Abergel C."/>
            <person name="Renesto P."/>
            <person name="Ogata H."/>
            <person name="La Scola B."/>
            <person name="Susan M."/>
            <person name="Claverie J.-M."/>
        </authorList>
    </citation>
    <scope>NUCLEOTIDE SEQUENCE [LARGE SCALE GENOMIC DNA]</scope>
    <source>
        <strain>Rowbotham-Bradford</strain>
    </source>
</reference>
<protein>
    <recommendedName>
        <fullName>Uncharacterized protein R556</fullName>
    </recommendedName>
</protein>
<organismHost>
    <name type="scientific">Acanthamoeba polyphaga</name>
    <name type="common">Amoeba</name>
    <dbReference type="NCBI Taxonomy" id="5757"/>
</organismHost>
<name>YR556_MIMIV</name>
<sequence length="293" mass="34745">MELKITKEKVTNSLELLGFQPKNIDLWFELIKELFSFYKYSEPISTFLGKCKAHNNNISKVMSSYNNYSYYKITSYKNFNKKDSFMVKFIEFYMQNNINIILDAFDFVHPNNWYYEKTNNTNVLHYIESHMINQLFCTICIIYLSEKTDRYVKKAFIGTISNYLNNKYYRKRQTSIKNHKVITEYMIKYLDPFFSNNTDQINEFMNDNDVGVCFHKCVANKRTLSNNPFLYSQDSYTHWAPLVVLLARNDITNELASFDIEDRINNKALEIICLNDSELTDTTQSSKKIVLNI</sequence>
<proteinExistence type="predicted"/>
<organism>
    <name type="scientific">Acanthamoeba polyphaga mimivirus</name>
    <name type="common">APMV</name>
    <dbReference type="NCBI Taxonomy" id="212035"/>
    <lineage>
        <taxon>Viruses</taxon>
        <taxon>Varidnaviria</taxon>
        <taxon>Bamfordvirae</taxon>
        <taxon>Nucleocytoviricota</taxon>
        <taxon>Megaviricetes</taxon>
        <taxon>Imitervirales</taxon>
        <taxon>Mimiviridae</taxon>
        <taxon>Megamimivirinae</taxon>
        <taxon>Mimivirus</taxon>
        <taxon>Mimivirus bradfordmassiliense</taxon>
    </lineage>
</organism>
<keyword id="KW-1185">Reference proteome</keyword>
<gene>
    <name type="ordered locus">MIMI_R556</name>
</gene>
<accession>Q5UR32</accession>
<feature type="chain" id="PRO_0000247369" description="Uncharacterized protein R556">
    <location>
        <begin position="1"/>
        <end position="293"/>
    </location>
</feature>
<dbReference type="EMBL" id="AY653733">
    <property type="protein sequence ID" value="AAV50820.1"/>
    <property type="molecule type" value="Genomic_DNA"/>
</dbReference>
<dbReference type="KEGG" id="vg:9925191"/>
<dbReference type="Proteomes" id="UP000001134">
    <property type="component" value="Genome"/>
</dbReference>